<organism>
    <name type="scientific">Loxosceles gaucho</name>
    <name type="common">Spider</name>
    <dbReference type="NCBI Taxonomy" id="58216"/>
    <lineage>
        <taxon>Eukaryota</taxon>
        <taxon>Metazoa</taxon>
        <taxon>Ecdysozoa</taxon>
        <taxon>Arthropoda</taxon>
        <taxon>Chelicerata</taxon>
        <taxon>Arachnida</taxon>
        <taxon>Araneae</taxon>
        <taxon>Araneomorphae</taxon>
        <taxon>Haplogynae</taxon>
        <taxon>Scytodoidea</taxon>
        <taxon>Sicariidae</taxon>
        <taxon>Loxosceles</taxon>
    </lineage>
</organism>
<feature type="chain" id="PRO_0000279566" description="Dermonecrotic toxin LgSicTox-beta-LOXN8">
    <location>
        <begin position="1"/>
        <end position="9" status="greater than"/>
    </location>
</feature>
<feature type="non-terminal residue">
    <location>
        <position position="9"/>
    </location>
</feature>
<sequence>ADSRKPIWI</sequence>
<evidence type="ECO:0000250" key="1"/>
<evidence type="ECO:0000250" key="2">
    <source>
        <dbReference type="UniProtKB" id="A0A0D4WTV1"/>
    </source>
</evidence>
<evidence type="ECO:0000250" key="3">
    <source>
        <dbReference type="UniProtKB" id="A0A0D4WV12"/>
    </source>
</evidence>
<evidence type="ECO:0000250" key="4">
    <source>
        <dbReference type="UniProtKB" id="P0CE80"/>
    </source>
</evidence>
<evidence type="ECO:0000250" key="5">
    <source>
        <dbReference type="UniProtKB" id="Q4ZFU2"/>
    </source>
</evidence>
<evidence type="ECO:0000250" key="6">
    <source>
        <dbReference type="UniProtKB" id="Q8I914"/>
    </source>
</evidence>
<evidence type="ECO:0000269" key="7">
    <source>
    </source>
</evidence>
<evidence type="ECO:0000305" key="8"/>
<evidence type="ECO:0000305" key="9">
    <source>
    </source>
</evidence>
<proteinExistence type="evidence at protein level"/>
<keyword id="KW-0204">Cytolysis</keyword>
<keyword id="KW-1061">Dermonecrotic toxin</keyword>
<keyword id="KW-0903">Direct protein sequencing</keyword>
<keyword id="KW-1015">Disulfide bond</keyword>
<keyword id="KW-0354">Hemolysis</keyword>
<keyword id="KW-0442">Lipid degradation</keyword>
<keyword id="KW-0443">Lipid metabolism</keyword>
<keyword id="KW-0456">Lyase</keyword>
<keyword id="KW-0460">Magnesium</keyword>
<keyword id="KW-0479">Metal-binding</keyword>
<keyword id="KW-0964">Secreted</keyword>
<keyword id="KW-0800">Toxin</keyword>
<dbReference type="EC" id="4.6.1.-" evidence="5"/>
<dbReference type="ArachnoServer" id="AS000156">
    <property type="toxin name" value="Sphingomyelinase D (LOXN8) (N-terminal fragment)"/>
</dbReference>
<dbReference type="GO" id="GO:0005576">
    <property type="term" value="C:extracellular region"/>
    <property type="evidence" value="ECO:0007669"/>
    <property type="project" value="UniProtKB-SubCell"/>
</dbReference>
<dbReference type="GO" id="GO:0016829">
    <property type="term" value="F:lyase activity"/>
    <property type="evidence" value="ECO:0007669"/>
    <property type="project" value="UniProtKB-KW"/>
</dbReference>
<dbReference type="GO" id="GO:0046872">
    <property type="term" value="F:metal ion binding"/>
    <property type="evidence" value="ECO:0007669"/>
    <property type="project" value="UniProtKB-KW"/>
</dbReference>
<dbReference type="GO" id="GO:0090729">
    <property type="term" value="F:toxin activity"/>
    <property type="evidence" value="ECO:0007669"/>
    <property type="project" value="UniProtKB-KW"/>
</dbReference>
<dbReference type="GO" id="GO:0031640">
    <property type="term" value="P:killing of cells of another organism"/>
    <property type="evidence" value="ECO:0007669"/>
    <property type="project" value="UniProtKB-KW"/>
</dbReference>
<dbReference type="GO" id="GO:0016042">
    <property type="term" value="P:lipid catabolic process"/>
    <property type="evidence" value="ECO:0007669"/>
    <property type="project" value="UniProtKB-KW"/>
</dbReference>
<name>BX8_LOXGA</name>
<protein>
    <recommendedName>
        <fullName>Dermonecrotic toxin LgSicTox-beta-LOXN8</fullName>
        <ecNumber evidence="5">4.6.1.-</ecNumber>
    </recommendedName>
    <alternativeName>
        <fullName>Phospholipase D</fullName>
        <shortName>PLD</shortName>
    </alternativeName>
    <alternativeName>
        <fullName>Sphingomyelin phosphodiesterase D</fullName>
        <shortName>SMD</shortName>
        <shortName>SMase D</shortName>
        <shortName>Sphingomyelinase D</shortName>
    </alternativeName>
</protein>
<reference key="1">
    <citation type="journal article" date="2005" name="Proteomics">
        <title>Proteome analysis of brown spider venom: identification of loxnecrogin isoforms in Loxosceles gaucho venom.</title>
        <authorList>
            <person name="Machado L.F."/>
            <person name="Laugesen S."/>
            <person name="Botelho E.D."/>
            <person name="Ricart C.A.O."/>
            <person name="Fontes W."/>
            <person name="Barbaro K.C."/>
            <person name="Roepstorff P."/>
            <person name="Sousa M.V."/>
        </authorList>
    </citation>
    <scope>PROTEIN SEQUENCE</scope>
    <scope>SUBCELLULAR LOCATION</scope>
    <source>
        <tissue>Venom</tissue>
    </source>
</reference>
<comment type="function">
    <text evidence="2 4">Dermonecrotic toxins cleave the phosphodiester linkage between the phosphate and headgroup of certain phospholipids (sphingolipid and lysolipid substrates), forming an alcohol (often choline) and a cyclic phosphate (By similarity). This toxin acts on sphingomyelin (SM) (By similarity). It may also act on ceramide phosphoethanolamine (CPE), lysophosphatidylcholine (LPC) and lysophosphatidylethanolamine (LPE), but not on lysophosphatidylserine (LPS), and lysophosphatidylglycerol (LPG) (By similarity). It acts by transphosphatidylation, releasing exclusively cyclic phosphate products as second products (By similarity). Induces dermonecrosis, hemolysis, increased vascular permeability, edema, inflammatory response, and platelet aggregation (By similarity).</text>
</comment>
<comment type="catalytic activity">
    <reaction evidence="2">
        <text>an N-(acyl)-sphingosylphosphocholine = an N-(acyl)-sphingosyl-1,3-cyclic phosphate + choline</text>
        <dbReference type="Rhea" id="RHEA:60652"/>
        <dbReference type="ChEBI" id="CHEBI:15354"/>
        <dbReference type="ChEBI" id="CHEBI:64583"/>
        <dbReference type="ChEBI" id="CHEBI:143892"/>
    </reaction>
</comment>
<comment type="catalytic activity">
    <reaction evidence="2">
        <text>an N-(acyl)-sphingosylphosphoethanolamine = an N-(acyl)-sphingosyl-1,3-cyclic phosphate + ethanolamine</text>
        <dbReference type="Rhea" id="RHEA:60648"/>
        <dbReference type="ChEBI" id="CHEBI:57603"/>
        <dbReference type="ChEBI" id="CHEBI:143891"/>
        <dbReference type="ChEBI" id="CHEBI:143892"/>
    </reaction>
</comment>
<comment type="catalytic activity">
    <reaction evidence="2">
        <text>a 1-acyl-sn-glycero-3-phosphocholine = a 1-acyl-sn-glycero-2,3-cyclic phosphate + choline</text>
        <dbReference type="Rhea" id="RHEA:60700"/>
        <dbReference type="ChEBI" id="CHEBI:15354"/>
        <dbReference type="ChEBI" id="CHEBI:58168"/>
        <dbReference type="ChEBI" id="CHEBI:143947"/>
    </reaction>
</comment>
<comment type="catalytic activity">
    <reaction evidence="2">
        <text>a 1-acyl-sn-glycero-3-phosphoethanolamine = a 1-acyl-sn-glycero-2,3-cyclic phosphate + ethanolamine</text>
        <dbReference type="Rhea" id="RHEA:60704"/>
        <dbReference type="ChEBI" id="CHEBI:57603"/>
        <dbReference type="ChEBI" id="CHEBI:64381"/>
        <dbReference type="ChEBI" id="CHEBI:143947"/>
    </reaction>
</comment>
<comment type="cofactor">
    <cofactor evidence="6">
        <name>Mg(2+)</name>
        <dbReference type="ChEBI" id="CHEBI:18420"/>
    </cofactor>
    <text evidence="6">Binds 1 Mg(2+) ion per subunit.</text>
</comment>
<comment type="subcellular location">
    <subcellularLocation>
        <location evidence="7">Secreted</location>
    </subcellularLocation>
</comment>
<comment type="tissue specificity">
    <text evidence="9">Expressed by the venom gland.</text>
</comment>
<comment type="PTM">
    <text evidence="1">Contains 2 disulfide bonds.</text>
</comment>
<comment type="similarity">
    <text evidence="8">Belongs to the arthropod phospholipase D family. Class II subfamily.</text>
</comment>
<comment type="caution">
    <text evidence="2 3 5">The most common activity assay for dermonecrotic toxins detects enzymatic activity by monitoring choline release from substrate. Liberation of choline from sphingomyelin (SM) or lysophosphatidylcholine (LPC) is commonly assumed to result from substrate hydrolysis, giving either ceramide-1-phosphate (C1P) or lysophosphatidic acid (LPA), respectively, as a second product. However, two studies from Lajoie and colleagues (2013 and 2015) report the observation of exclusive formation of cyclic phosphate products as second products, resulting from intramolecular transphosphatidylation. Cyclic phosphates have vastly different biological properties from their monoester counterparts, and they may be relevant to the pathology of brown spider envenomation.</text>
</comment>
<accession>P0C2K9</accession>